<accession>O09198</accession>
<accession>O08819</accession>
<accession>O09109</accession>
<accession>Q545Q7</accession>
<accession>Q9D2R2</accession>
<comment type="function">
    <text evidence="5">May be involved in vesicular trafficking from the Golgi apparatus to the cell membrane. Plays a role in the maintenance of the myelin sheath, and in axon-glia and glia-glia interactions.</text>
</comment>
<comment type="subunit">
    <text evidence="2">Interacts with PLP1.</text>
</comment>
<comment type="subcellular location">
    <subcellularLocation>
        <location>Membrane</location>
        <topology>Multi-pass membrane protein</topology>
    </subcellularLocation>
    <subcellularLocation>
        <location evidence="5">Cell membrane</location>
    </subcellularLocation>
    <text evidence="5">Found in lipid rafts.</text>
</comment>
<comment type="alternative products">
    <event type="alternative splicing"/>
    <isoform>
        <id>O09198-1</id>
        <name>1</name>
        <name>A</name>
        <sequence type="displayed"/>
    </isoform>
    <isoform>
        <id>O09198-2</id>
        <name>2</name>
        <name>C</name>
        <sequence type="described" ref="VSP_031253"/>
    </isoform>
</comment>
<comment type="tissue specificity">
    <text evidence="5">Expressed in the spinal cord, brain, kidney and gastrointestinal tract especially in the stomach and caecum. Highly expressed by myelinating glial cells.</text>
</comment>
<comment type="PTM">
    <text evidence="1">Lipoprotein.</text>
</comment>
<comment type="disruption phenotype">
    <text evidence="5">Abnormal myelination and optic nerve morphology.</text>
</comment>
<comment type="similarity">
    <text evidence="7">Belongs to the MAL family.</text>
</comment>
<reference key="1">
    <citation type="journal article" date="1997" name="Gene">
        <title>Myelin and lymphocyte protein (MAL/MVP17/VIP17) and plasmolipin are members of an extended gene family.</title>
        <authorList>
            <person name="Magyar J.P."/>
            <person name="Ebensperger C."/>
            <person name="Schaeren-Wiemers N."/>
            <person name="Suter U."/>
        </authorList>
    </citation>
    <scope>NUCLEOTIDE SEQUENCE [GENOMIC DNA / MRNA]</scope>
    <source>
        <strain>BALB/cJ</strain>
        <tissue>Brain</tissue>
    </source>
</reference>
<reference key="2">
    <citation type="journal article" date="1997" name="Biochem. Biophys. Res. Commun.">
        <title>Structural and biochemical similarities reveal a family of proteins related to the MAL proteolipid, a component of detergent-insoluble membrane microdomains.</title>
        <authorList>
            <person name="Perez P."/>
            <person name="Puertollano R."/>
            <person name="Alonso M.A."/>
        </authorList>
    </citation>
    <scope>NUCLEOTIDE SEQUENCE [MRNA] (ISOFORM 1)</scope>
    <scope>SUBCELLULAR LOCATION</scope>
</reference>
<reference key="3">
    <citation type="journal article" date="2005" name="Science">
        <title>The transcriptional landscape of the mammalian genome.</title>
        <authorList>
            <person name="Carninci P."/>
            <person name="Kasukawa T."/>
            <person name="Katayama S."/>
            <person name="Gough J."/>
            <person name="Frith M.C."/>
            <person name="Maeda N."/>
            <person name="Oyama R."/>
            <person name="Ravasi T."/>
            <person name="Lenhard B."/>
            <person name="Wells C."/>
            <person name="Kodzius R."/>
            <person name="Shimokawa K."/>
            <person name="Bajic V.B."/>
            <person name="Brenner S.E."/>
            <person name="Batalov S."/>
            <person name="Forrest A.R."/>
            <person name="Zavolan M."/>
            <person name="Davis M.J."/>
            <person name="Wilming L.G."/>
            <person name="Aidinis V."/>
            <person name="Allen J.E."/>
            <person name="Ambesi-Impiombato A."/>
            <person name="Apweiler R."/>
            <person name="Aturaliya R.N."/>
            <person name="Bailey T.L."/>
            <person name="Bansal M."/>
            <person name="Baxter L."/>
            <person name="Beisel K.W."/>
            <person name="Bersano T."/>
            <person name="Bono H."/>
            <person name="Chalk A.M."/>
            <person name="Chiu K.P."/>
            <person name="Choudhary V."/>
            <person name="Christoffels A."/>
            <person name="Clutterbuck D.R."/>
            <person name="Crowe M.L."/>
            <person name="Dalla E."/>
            <person name="Dalrymple B.P."/>
            <person name="de Bono B."/>
            <person name="Della Gatta G."/>
            <person name="di Bernardo D."/>
            <person name="Down T."/>
            <person name="Engstrom P."/>
            <person name="Fagiolini M."/>
            <person name="Faulkner G."/>
            <person name="Fletcher C.F."/>
            <person name="Fukushima T."/>
            <person name="Furuno M."/>
            <person name="Futaki S."/>
            <person name="Gariboldi M."/>
            <person name="Georgii-Hemming P."/>
            <person name="Gingeras T.R."/>
            <person name="Gojobori T."/>
            <person name="Green R.E."/>
            <person name="Gustincich S."/>
            <person name="Harbers M."/>
            <person name="Hayashi Y."/>
            <person name="Hensch T.K."/>
            <person name="Hirokawa N."/>
            <person name="Hill D."/>
            <person name="Huminiecki L."/>
            <person name="Iacono M."/>
            <person name="Ikeo K."/>
            <person name="Iwama A."/>
            <person name="Ishikawa T."/>
            <person name="Jakt M."/>
            <person name="Kanapin A."/>
            <person name="Katoh M."/>
            <person name="Kawasawa Y."/>
            <person name="Kelso J."/>
            <person name="Kitamura H."/>
            <person name="Kitano H."/>
            <person name="Kollias G."/>
            <person name="Krishnan S.P."/>
            <person name="Kruger A."/>
            <person name="Kummerfeld S.K."/>
            <person name="Kurochkin I.V."/>
            <person name="Lareau L.F."/>
            <person name="Lazarevic D."/>
            <person name="Lipovich L."/>
            <person name="Liu J."/>
            <person name="Liuni S."/>
            <person name="McWilliam S."/>
            <person name="Madan Babu M."/>
            <person name="Madera M."/>
            <person name="Marchionni L."/>
            <person name="Matsuda H."/>
            <person name="Matsuzawa S."/>
            <person name="Miki H."/>
            <person name="Mignone F."/>
            <person name="Miyake S."/>
            <person name="Morris K."/>
            <person name="Mottagui-Tabar S."/>
            <person name="Mulder N."/>
            <person name="Nakano N."/>
            <person name="Nakauchi H."/>
            <person name="Ng P."/>
            <person name="Nilsson R."/>
            <person name="Nishiguchi S."/>
            <person name="Nishikawa S."/>
            <person name="Nori F."/>
            <person name="Ohara O."/>
            <person name="Okazaki Y."/>
            <person name="Orlando V."/>
            <person name="Pang K.C."/>
            <person name="Pavan W.J."/>
            <person name="Pavesi G."/>
            <person name="Pesole G."/>
            <person name="Petrovsky N."/>
            <person name="Piazza S."/>
            <person name="Reed J."/>
            <person name="Reid J.F."/>
            <person name="Ring B.Z."/>
            <person name="Ringwald M."/>
            <person name="Rost B."/>
            <person name="Ruan Y."/>
            <person name="Salzberg S.L."/>
            <person name="Sandelin A."/>
            <person name="Schneider C."/>
            <person name="Schoenbach C."/>
            <person name="Sekiguchi K."/>
            <person name="Semple C.A."/>
            <person name="Seno S."/>
            <person name="Sessa L."/>
            <person name="Sheng Y."/>
            <person name="Shibata Y."/>
            <person name="Shimada H."/>
            <person name="Shimada K."/>
            <person name="Silva D."/>
            <person name="Sinclair B."/>
            <person name="Sperling S."/>
            <person name="Stupka E."/>
            <person name="Sugiura K."/>
            <person name="Sultana R."/>
            <person name="Takenaka Y."/>
            <person name="Taki K."/>
            <person name="Tammoja K."/>
            <person name="Tan S.L."/>
            <person name="Tang S."/>
            <person name="Taylor M.S."/>
            <person name="Tegner J."/>
            <person name="Teichmann S.A."/>
            <person name="Ueda H.R."/>
            <person name="van Nimwegen E."/>
            <person name="Verardo R."/>
            <person name="Wei C.L."/>
            <person name="Yagi K."/>
            <person name="Yamanishi H."/>
            <person name="Zabarovsky E."/>
            <person name="Zhu S."/>
            <person name="Zimmer A."/>
            <person name="Hide W."/>
            <person name="Bult C."/>
            <person name="Grimmond S.M."/>
            <person name="Teasdale R.D."/>
            <person name="Liu E.T."/>
            <person name="Brusic V."/>
            <person name="Quackenbush J."/>
            <person name="Wahlestedt C."/>
            <person name="Mattick J.S."/>
            <person name="Hume D.A."/>
            <person name="Kai C."/>
            <person name="Sasaki D."/>
            <person name="Tomaru Y."/>
            <person name="Fukuda S."/>
            <person name="Kanamori-Katayama M."/>
            <person name="Suzuki M."/>
            <person name="Aoki J."/>
            <person name="Arakawa T."/>
            <person name="Iida J."/>
            <person name="Imamura K."/>
            <person name="Itoh M."/>
            <person name="Kato T."/>
            <person name="Kawaji H."/>
            <person name="Kawagashira N."/>
            <person name="Kawashima T."/>
            <person name="Kojima M."/>
            <person name="Kondo S."/>
            <person name="Konno H."/>
            <person name="Nakano K."/>
            <person name="Ninomiya N."/>
            <person name="Nishio T."/>
            <person name="Okada M."/>
            <person name="Plessy C."/>
            <person name="Shibata K."/>
            <person name="Shiraki T."/>
            <person name="Suzuki S."/>
            <person name="Tagami M."/>
            <person name="Waki K."/>
            <person name="Watahiki A."/>
            <person name="Okamura-Oho Y."/>
            <person name="Suzuki H."/>
            <person name="Kawai J."/>
            <person name="Hayashizaki Y."/>
        </authorList>
    </citation>
    <scope>NUCLEOTIDE SEQUENCE [LARGE SCALE MRNA] (ISOFORMS 1 AND 2)</scope>
    <source>
        <strain>C57BL/6J</strain>
        <tissue>Lung</tissue>
        <tissue>Stomach</tissue>
        <tissue>Visual cortex</tissue>
    </source>
</reference>
<reference key="4">
    <citation type="journal article" date="2009" name="PLoS Biol.">
        <title>Lineage-specific biology revealed by a finished genome assembly of the mouse.</title>
        <authorList>
            <person name="Church D.M."/>
            <person name="Goodstadt L."/>
            <person name="Hillier L.W."/>
            <person name="Zody M.C."/>
            <person name="Goldstein S."/>
            <person name="She X."/>
            <person name="Bult C.J."/>
            <person name="Agarwala R."/>
            <person name="Cherry J.L."/>
            <person name="DiCuccio M."/>
            <person name="Hlavina W."/>
            <person name="Kapustin Y."/>
            <person name="Meric P."/>
            <person name="Maglott D."/>
            <person name="Birtle Z."/>
            <person name="Marques A.C."/>
            <person name="Graves T."/>
            <person name="Zhou S."/>
            <person name="Teague B."/>
            <person name="Potamousis K."/>
            <person name="Churas C."/>
            <person name="Place M."/>
            <person name="Herschleb J."/>
            <person name="Runnheim R."/>
            <person name="Forrest D."/>
            <person name="Amos-Landgraf J."/>
            <person name="Schwartz D.C."/>
            <person name="Cheng Z."/>
            <person name="Lindblad-Toh K."/>
            <person name="Eichler E.E."/>
            <person name="Ponting C.P."/>
        </authorList>
    </citation>
    <scope>NUCLEOTIDE SEQUENCE [LARGE SCALE GENOMIC DNA]</scope>
    <source>
        <strain>C57BL/6J</strain>
    </source>
</reference>
<reference key="5">
    <citation type="journal article" date="2004" name="Genome Res.">
        <title>The status, quality, and expansion of the NIH full-length cDNA project: the Mammalian Gene Collection (MGC).</title>
        <authorList>
            <consortium name="The MGC Project Team"/>
        </authorList>
    </citation>
    <scope>NUCLEOTIDE SEQUENCE [LARGE SCALE MRNA]</scope>
</reference>
<reference key="6">
    <citation type="journal article" date="2004" name="J. Cell Biol.">
        <title>The raft-associated protein MAL is required for maintenance of proper axon-glia interactions in the central nervous system.</title>
        <authorList>
            <person name="Schaeren-Wiemers N."/>
            <person name="Bonnet A."/>
            <person name="Erb M."/>
            <person name="Erne B."/>
            <person name="Bartsch U."/>
            <person name="Kern F."/>
            <person name="Mantei N."/>
            <person name="Sherman D."/>
            <person name="Suter U."/>
        </authorList>
    </citation>
    <scope>FUNCTION</scope>
    <scope>TISSUE SPECIFICITY</scope>
    <scope>DISRUPTION PHENOTYPE</scope>
</reference>
<reference key="7">
    <citation type="journal article" date="2004" name="Neurobiol. Dis.">
        <title>Specific downregulation and mistargeting of the lipid raft-associated protein MAL in a glycolipid storage disorder.</title>
        <authorList>
            <person name="Saravanan K."/>
            <person name="Schaeren-Wiemers N."/>
            <person name="Klein D."/>
            <person name="Sandhoff R."/>
            <person name="Schwarz A."/>
            <person name="Yaghootfam A."/>
            <person name="Gieselmann V."/>
            <person name="Franken S."/>
        </authorList>
    </citation>
    <scope>SUBCELLULAR LOCATION</scope>
</reference>
<feature type="chain" id="PRO_0000156806" description="Myelin and lymphocyte protein">
    <location>
        <begin position="1"/>
        <end position="153"/>
    </location>
</feature>
<feature type="topological domain" description="Cytoplasmic" evidence="3">
    <location>
        <begin position="1"/>
        <end position="24"/>
    </location>
</feature>
<feature type="transmembrane region" description="Helical" evidence="3">
    <location>
        <begin position="25"/>
        <end position="46"/>
    </location>
</feature>
<feature type="topological domain" description="Extracellular" evidence="3">
    <location>
        <begin position="47"/>
        <end position="53"/>
    </location>
</feature>
<feature type="transmembrane region" description="Helical" evidence="3">
    <location>
        <begin position="54"/>
        <end position="75"/>
    </location>
</feature>
<feature type="topological domain" description="Cytoplasmic" evidence="3">
    <location>
        <begin position="76"/>
        <end position="92"/>
    </location>
</feature>
<feature type="transmembrane region" description="Helical" evidence="3">
    <location>
        <begin position="93"/>
        <end position="114"/>
    </location>
</feature>
<feature type="topological domain" description="Extracellular" evidence="3">
    <location>
        <begin position="115"/>
        <end position="125"/>
    </location>
</feature>
<feature type="transmembrane region" description="Helical" evidence="3">
    <location>
        <begin position="126"/>
        <end position="147"/>
    </location>
</feature>
<feature type="topological domain" description="Cytoplasmic" evidence="3">
    <location>
        <begin position="148"/>
        <end position="153"/>
    </location>
</feature>
<feature type="domain" description="MARVEL" evidence="4">
    <location>
        <begin position="18"/>
        <end position="151"/>
    </location>
</feature>
<feature type="splice variant" id="VSP_031253" description="In isoform 2." evidence="6">
    <location>
        <begin position="32"/>
        <end position="87"/>
    </location>
</feature>
<name>MAL_MOUSE</name>
<protein>
    <recommendedName>
        <fullName>Myelin and lymphocyte protein</fullName>
    </recommendedName>
    <alternativeName>
        <fullName>T-lymphocyte maturation-associated protein</fullName>
    </alternativeName>
</protein>
<keyword id="KW-0025">Alternative splicing</keyword>
<keyword id="KW-1003">Cell membrane</keyword>
<keyword id="KW-0449">Lipoprotein</keyword>
<keyword id="KW-0472">Membrane</keyword>
<keyword id="KW-1185">Reference proteome</keyword>
<keyword id="KW-0812">Transmembrane</keyword>
<keyword id="KW-1133">Transmembrane helix</keyword>
<gene>
    <name type="primary">Mal</name>
</gene>
<sequence>MAPAAASGGSTLPSGFSVFTTFPDLLFVCEFVFGGLVWILIASSLVPLPLAQGWVMFVSVFCFVATTSLMILYIIGTHGGETSWITLDAAYHCVAALFYLSASVLEALATISMFDGFTYKHYHENIAAVVFAYVVTLIYVVHAVFSLIRWKSS</sequence>
<evidence type="ECO:0000250" key="1"/>
<evidence type="ECO:0000250" key="2">
    <source>
        <dbReference type="UniProtKB" id="P21145"/>
    </source>
</evidence>
<evidence type="ECO:0000255" key="3"/>
<evidence type="ECO:0000255" key="4">
    <source>
        <dbReference type="PROSITE-ProRule" id="PRU00581"/>
    </source>
</evidence>
<evidence type="ECO:0000269" key="5">
    <source>
    </source>
</evidence>
<evidence type="ECO:0000303" key="6">
    <source>
    </source>
</evidence>
<evidence type="ECO:0000305" key="7"/>
<proteinExistence type="evidence at transcript level"/>
<dbReference type="EMBL" id="Y07626">
    <property type="protein sequence ID" value="CAA68907.1"/>
    <property type="molecule type" value="mRNA"/>
</dbReference>
<dbReference type="EMBL" id="Y07627">
    <property type="protein sequence ID" value="CAA68908.1"/>
    <property type="molecule type" value="Genomic_DNA"/>
</dbReference>
<dbReference type="EMBL" id="Y07628">
    <property type="protein sequence ID" value="CAA68908.1"/>
    <property type="status" value="JOINED"/>
    <property type="molecule type" value="Genomic_DNA"/>
</dbReference>
<dbReference type="EMBL" id="Y07629">
    <property type="protein sequence ID" value="CAA68908.1"/>
    <property type="status" value="JOINED"/>
    <property type="molecule type" value="Genomic_DNA"/>
</dbReference>
<dbReference type="EMBL" id="Y07630">
    <property type="protein sequence ID" value="CAA68908.1"/>
    <property type="status" value="JOINED"/>
    <property type="molecule type" value="Genomic_DNA"/>
</dbReference>
<dbReference type="EMBL" id="Y07812">
    <property type="protein sequence ID" value="CAA69143.1"/>
    <property type="molecule type" value="mRNA"/>
</dbReference>
<dbReference type="EMBL" id="AK004639">
    <property type="protein sequence ID" value="BAB23430.1"/>
    <property type="molecule type" value="mRNA"/>
</dbReference>
<dbReference type="EMBL" id="AK019046">
    <property type="protein sequence ID" value="BAB31523.1"/>
    <property type="molecule type" value="mRNA"/>
</dbReference>
<dbReference type="EMBL" id="AK158653">
    <property type="protein sequence ID" value="BAE34599.1"/>
    <property type="molecule type" value="mRNA"/>
</dbReference>
<dbReference type="EMBL" id="AK169172">
    <property type="protein sequence ID" value="BAE40951.1"/>
    <property type="molecule type" value="mRNA"/>
</dbReference>
<dbReference type="EMBL" id="AL731831">
    <property type="status" value="NOT_ANNOTATED_CDS"/>
    <property type="molecule type" value="Genomic_DNA"/>
</dbReference>
<dbReference type="EMBL" id="AL844204">
    <property type="status" value="NOT_ANNOTATED_CDS"/>
    <property type="molecule type" value="Genomic_DNA"/>
</dbReference>
<dbReference type="EMBL" id="BC006826">
    <property type="protein sequence ID" value="AAH06826.1"/>
    <property type="molecule type" value="mRNA"/>
</dbReference>
<dbReference type="CCDS" id="CCDS16707.1">
    <molecule id="O09198-1"/>
</dbReference>
<dbReference type="CCDS" id="CCDS50705.1">
    <molecule id="O09198-2"/>
</dbReference>
<dbReference type="RefSeq" id="NP_001164658.1">
    <molecule id="O09198-2"/>
    <property type="nucleotide sequence ID" value="NM_001171187.1"/>
</dbReference>
<dbReference type="RefSeq" id="NP_034892.1">
    <molecule id="O09198-1"/>
    <property type="nucleotide sequence ID" value="NM_010762.5"/>
</dbReference>
<dbReference type="SMR" id="O09198"/>
<dbReference type="FunCoup" id="O09198">
    <property type="interactions" value="67"/>
</dbReference>
<dbReference type="STRING" id="10090.ENSMUSP00000028854"/>
<dbReference type="PaxDb" id="10090-ENSMUSP00000028854"/>
<dbReference type="Antibodypedia" id="32290">
    <property type="antibodies" value="214 antibodies from 31 providers"/>
</dbReference>
<dbReference type="DNASU" id="17153"/>
<dbReference type="Ensembl" id="ENSMUST00000028853.7">
    <molecule id="O09198-2"/>
    <property type="protein sequence ID" value="ENSMUSP00000028853.7"/>
    <property type="gene ID" value="ENSMUSG00000027375.15"/>
</dbReference>
<dbReference type="Ensembl" id="ENSMUST00000028854.15">
    <molecule id="O09198-1"/>
    <property type="protein sequence ID" value="ENSMUSP00000028854.9"/>
    <property type="gene ID" value="ENSMUSG00000027375.15"/>
</dbReference>
<dbReference type="GeneID" id="17153"/>
<dbReference type="KEGG" id="mmu:17153"/>
<dbReference type="UCSC" id="uc008mfv.2">
    <molecule id="O09198-1"/>
    <property type="organism name" value="mouse"/>
</dbReference>
<dbReference type="UCSC" id="uc008mfw.2">
    <molecule id="O09198-2"/>
    <property type="organism name" value="mouse"/>
</dbReference>
<dbReference type="AGR" id="MGI:892970"/>
<dbReference type="CTD" id="4118"/>
<dbReference type="MGI" id="MGI:892970">
    <property type="gene designation" value="Mal"/>
</dbReference>
<dbReference type="VEuPathDB" id="HostDB:ENSMUSG00000027375"/>
<dbReference type="eggNOG" id="KOG4788">
    <property type="taxonomic scope" value="Eukaryota"/>
</dbReference>
<dbReference type="GeneTree" id="ENSGT00940000154987"/>
<dbReference type="HOGENOM" id="CLU_112950_0_0_1"/>
<dbReference type="InParanoid" id="O09198"/>
<dbReference type="OMA" id="YIINAHG"/>
<dbReference type="OrthoDB" id="9940869at2759"/>
<dbReference type="PhylomeDB" id="O09198"/>
<dbReference type="TreeFam" id="TF316174"/>
<dbReference type="BioGRID-ORCS" id="17153">
    <property type="hits" value="2 hits in 77 CRISPR screens"/>
</dbReference>
<dbReference type="ChiTaRS" id="Mal">
    <property type="organism name" value="mouse"/>
</dbReference>
<dbReference type="PRO" id="PR:O09198"/>
<dbReference type="Proteomes" id="UP000000589">
    <property type="component" value="Chromosome 2"/>
</dbReference>
<dbReference type="RNAct" id="O09198">
    <property type="molecule type" value="protein"/>
</dbReference>
<dbReference type="Bgee" id="ENSMUSG00000027375">
    <property type="expression patterns" value="Expressed in urinary bladder urothelium and 206 other cell types or tissues"/>
</dbReference>
<dbReference type="GO" id="GO:0016324">
    <property type="term" value="C:apical plasma membrane"/>
    <property type="evidence" value="ECO:0000314"/>
    <property type="project" value="MGI"/>
</dbReference>
<dbReference type="GO" id="GO:0005783">
    <property type="term" value="C:endoplasmic reticulum"/>
    <property type="evidence" value="ECO:0007669"/>
    <property type="project" value="Ensembl"/>
</dbReference>
<dbReference type="GO" id="GO:0005794">
    <property type="term" value="C:Golgi apparatus"/>
    <property type="evidence" value="ECO:0007669"/>
    <property type="project" value="UniProtKB-KW"/>
</dbReference>
<dbReference type="GO" id="GO:0120003">
    <property type="term" value="C:hinge region between urothelial plaques of apical plasma membrane"/>
    <property type="evidence" value="ECO:0000315"/>
    <property type="project" value="MGI"/>
</dbReference>
<dbReference type="GO" id="GO:0045121">
    <property type="term" value="C:membrane raft"/>
    <property type="evidence" value="ECO:0000314"/>
    <property type="project" value="MGI"/>
</dbReference>
<dbReference type="GO" id="GO:0044853">
    <property type="term" value="C:plasma membrane raft"/>
    <property type="evidence" value="ECO:0000315"/>
    <property type="project" value="MGI"/>
</dbReference>
<dbReference type="GO" id="GO:0043220">
    <property type="term" value="C:Schmidt-Lanterman incisure"/>
    <property type="evidence" value="ECO:0007669"/>
    <property type="project" value="Ensembl"/>
</dbReference>
<dbReference type="GO" id="GO:0019911">
    <property type="term" value="F:structural constituent of myelin sheath"/>
    <property type="evidence" value="ECO:0007669"/>
    <property type="project" value="Ensembl"/>
</dbReference>
<dbReference type="GO" id="GO:0022010">
    <property type="term" value="P:central nervous system myelination"/>
    <property type="evidence" value="ECO:0000315"/>
    <property type="project" value="MGI"/>
</dbReference>
<dbReference type="GO" id="GO:0042552">
    <property type="term" value="P:myelination"/>
    <property type="evidence" value="ECO:0000315"/>
    <property type="project" value="MGI"/>
</dbReference>
<dbReference type="GO" id="GO:1902043">
    <property type="term" value="P:positive regulation of extrinsic apoptotic signaling pathway via death domain receptors"/>
    <property type="evidence" value="ECO:0000314"/>
    <property type="project" value="MGI"/>
</dbReference>
<dbReference type="GO" id="GO:0098737">
    <property type="term" value="P:protein insertion into plasma membrane"/>
    <property type="evidence" value="ECO:0000315"/>
    <property type="project" value="MGI"/>
</dbReference>
<dbReference type="GO" id="GO:0002175">
    <property type="term" value="P:protein localization to paranode region of axon"/>
    <property type="evidence" value="ECO:0000315"/>
    <property type="project" value="MGI"/>
</dbReference>
<dbReference type="InterPro" id="IPR013295">
    <property type="entry name" value="MAL"/>
</dbReference>
<dbReference type="InterPro" id="IPR008253">
    <property type="entry name" value="Marvel"/>
</dbReference>
<dbReference type="InterPro" id="IPR050578">
    <property type="entry name" value="MARVEL-CKLF_proteins"/>
</dbReference>
<dbReference type="PANTHER" id="PTHR22776">
    <property type="entry name" value="MARVEL-CONTAINING POTENTIAL LIPID RAFT-ASSOCIATED PROTEIN"/>
    <property type="match status" value="1"/>
</dbReference>
<dbReference type="PANTHER" id="PTHR22776:SF12">
    <property type="entry name" value="MYELIN AND LYMPHOCYTE PROTEIN"/>
    <property type="match status" value="1"/>
</dbReference>
<dbReference type="Pfam" id="PF01284">
    <property type="entry name" value="MARVEL"/>
    <property type="match status" value="1"/>
</dbReference>
<dbReference type="PRINTS" id="PR01884">
    <property type="entry name" value="MALPROTEIN"/>
</dbReference>
<dbReference type="PROSITE" id="PS51225">
    <property type="entry name" value="MARVEL"/>
    <property type="match status" value="1"/>
</dbReference>
<organism>
    <name type="scientific">Mus musculus</name>
    <name type="common">Mouse</name>
    <dbReference type="NCBI Taxonomy" id="10090"/>
    <lineage>
        <taxon>Eukaryota</taxon>
        <taxon>Metazoa</taxon>
        <taxon>Chordata</taxon>
        <taxon>Craniata</taxon>
        <taxon>Vertebrata</taxon>
        <taxon>Euteleostomi</taxon>
        <taxon>Mammalia</taxon>
        <taxon>Eutheria</taxon>
        <taxon>Euarchontoglires</taxon>
        <taxon>Glires</taxon>
        <taxon>Rodentia</taxon>
        <taxon>Myomorpha</taxon>
        <taxon>Muroidea</taxon>
        <taxon>Muridae</taxon>
        <taxon>Murinae</taxon>
        <taxon>Mus</taxon>
        <taxon>Mus</taxon>
    </lineage>
</organism>